<protein>
    <recommendedName>
        <fullName>UPF0758 protein NMCC_1157</fullName>
    </recommendedName>
</protein>
<feature type="chain" id="PRO_1000074147" description="UPF0758 protein NMCC_1157">
    <location>
        <begin position="1"/>
        <end position="225"/>
    </location>
</feature>
<feature type="domain" description="MPN" evidence="1">
    <location>
        <begin position="102"/>
        <end position="224"/>
    </location>
</feature>
<feature type="short sequence motif" description="JAMM motif" evidence="1">
    <location>
        <begin position="173"/>
        <end position="186"/>
    </location>
</feature>
<feature type="binding site" evidence="1">
    <location>
        <position position="173"/>
    </location>
    <ligand>
        <name>Zn(2+)</name>
        <dbReference type="ChEBI" id="CHEBI:29105"/>
        <note>catalytic</note>
    </ligand>
</feature>
<feature type="binding site" evidence="1">
    <location>
        <position position="175"/>
    </location>
    <ligand>
        <name>Zn(2+)</name>
        <dbReference type="ChEBI" id="CHEBI:29105"/>
        <note>catalytic</note>
    </ligand>
</feature>
<feature type="binding site" evidence="1">
    <location>
        <position position="186"/>
    </location>
    <ligand>
        <name>Zn(2+)</name>
        <dbReference type="ChEBI" id="CHEBI:29105"/>
        <note>catalytic</note>
    </ligand>
</feature>
<gene>
    <name type="ordered locus">NMCC_1157</name>
</gene>
<keyword id="KW-0378">Hydrolase</keyword>
<keyword id="KW-0479">Metal-binding</keyword>
<keyword id="KW-0482">Metalloprotease</keyword>
<keyword id="KW-0645">Protease</keyword>
<keyword id="KW-0862">Zinc</keyword>
<organism>
    <name type="scientific">Neisseria meningitidis serogroup C (strain 053442)</name>
    <dbReference type="NCBI Taxonomy" id="374833"/>
    <lineage>
        <taxon>Bacteria</taxon>
        <taxon>Pseudomonadati</taxon>
        <taxon>Pseudomonadota</taxon>
        <taxon>Betaproteobacteria</taxon>
        <taxon>Neisseriales</taxon>
        <taxon>Neisseriaceae</taxon>
        <taxon>Neisseria</taxon>
    </lineage>
</organism>
<proteinExistence type="inferred from homology"/>
<reference key="1">
    <citation type="journal article" date="2008" name="Genomics">
        <title>Characterization of ST-4821 complex, a unique Neisseria meningitidis clone.</title>
        <authorList>
            <person name="Peng J."/>
            <person name="Yang L."/>
            <person name="Yang F."/>
            <person name="Yang J."/>
            <person name="Yan Y."/>
            <person name="Nie H."/>
            <person name="Zhang X."/>
            <person name="Xiong Z."/>
            <person name="Jiang Y."/>
            <person name="Cheng F."/>
            <person name="Xu X."/>
            <person name="Chen S."/>
            <person name="Sun L."/>
            <person name="Li W."/>
            <person name="Shen Y."/>
            <person name="Shao Z."/>
            <person name="Liang X."/>
            <person name="Xu J."/>
            <person name="Jin Q."/>
        </authorList>
    </citation>
    <scope>NUCLEOTIDE SEQUENCE [LARGE SCALE GENOMIC DNA]</scope>
    <source>
        <strain>053442</strain>
    </source>
</reference>
<accession>A9LZF5</accession>
<dbReference type="EMBL" id="CP000381">
    <property type="protein sequence ID" value="ABX73331.1"/>
    <property type="molecule type" value="Genomic_DNA"/>
</dbReference>
<dbReference type="SMR" id="A9LZF5"/>
<dbReference type="KEGG" id="nmn:NMCC_1157"/>
<dbReference type="HOGENOM" id="CLU_073529_0_1_4"/>
<dbReference type="Proteomes" id="UP000001177">
    <property type="component" value="Chromosome"/>
</dbReference>
<dbReference type="GO" id="GO:0046872">
    <property type="term" value="F:metal ion binding"/>
    <property type="evidence" value="ECO:0007669"/>
    <property type="project" value="UniProtKB-KW"/>
</dbReference>
<dbReference type="GO" id="GO:0008237">
    <property type="term" value="F:metallopeptidase activity"/>
    <property type="evidence" value="ECO:0007669"/>
    <property type="project" value="UniProtKB-KW"/>
</dbReference>
<dbReference type="GO" id="GO:0006508">
    <property type="term" value="P:proteolysis"/>
    <property type="evidence" value="ECO:0007669"/>
    <property type="project" value="UniProtKB-KW"/>
</dbReference>
<dbReference type="CDD" id="cd08071">
    <property type="entry name" value="MPN_DUF2466"/>
    <property type="match status" value="1"/>
</dbReference>
<dbReference type="Gene3D" id="3.40.140.10">
    <property type="entry name" value="Cytidine Deaminase, domain 2"/>
    <property type="match status" value="1"/>
</dbReference>
<dbReference type="InterPro" id="IPR037518">
    <property type="entry name" value="MPN"/>
</dbReference>
<dbReference type="InterPro" id="IPR025657">
    <property type="entry name" value="RadC_JAB"/>
</dbReference>
<dbReference type="InterPro" id="IPR010994">
    <property type="entry name" value="RuvA_2-like"/>
</dbReference>
<dbReference type="InterPro" id="IPR001405">
    <property type="entry name" value="UPF0758"/>
</dbReference>
<dbReference type="InterPro" id="IPR046778">
    <property type="entry name" value="UPF0758_N"/>
</dbReference>
<dbReference type="NCBIfam" id="NF000642">
    <property type="entry name" value="PRK00024.1"/>
    <property type="match status" value="1"/>
</dbReference>
<dbReference type="NCBIfam" id="TIGR00608">
    <property type="entry name" value="radc"/>
    <property type="match status" value="1"/>
</dbReference>
<dbReference type="PANTHER" id="PTHR30471">
    <property type="entry name" value="DNA REPAIR PROTEIN RADC"/>
    <property type="match status" value="1"/>
</dbReference>
<dbReference type="PANTHER" id="PTHR30471:SF3">
    <property type="entry name" value="UPF0758 PROTEIN YEES-RELATED"/>
    <property type="match status" value="1"/>
</dbReference>
<dbReference type="Pfam" id="PF04002">
    <property type="entry name" value="RadC"/>
    <property type="match status" value="1"/>
</dbReference>
<dbReference type="Pfam" id="PF20582">
    <property type="entry name" value="UPF0758_N"/>
    <property type="match status" value="1"/>
</dbReference>
<dbReference type="SUPFAM" id="SSF102712">
    <property type="entry name" value="JAB1/MPN domain"/>
    <property type="match status" value="1"/>
</dbReference>
<dbReference type="SUPFAM" id="SSF47781">
    <property type="entry name" value="RuvA domain 2-like"/>
    <property type="match status" value="1"/>
</dbReference>
<dbReference type="PROSITE" id="PS50249">
    <property type="entry name" value="MPN"/>
    <property type="match status" value="1"/>
</dbReference>
<name>Y1157_NEIM0</name>
<comment type="similarity">
    <text evidence="2">Belongs to the UPF0758 family.</text>
</comment>
<evidence type="ECO:0000255" key="1">
    <source>
        <dbReference type="PROSITE-ProRule" id="PRU01182"/>
    </source>
</evidence>
<evidence type="ECO:0000305" key="2"/>
<sequence length="225" mass="24991">MSIKQWPEGERPREKLLERGAAALSDAELLAILLRVGTRGMSAVDLARYLLQEFGSLGRLMSAEVGKLSAYKGMGTASFTQFAVVREIGRRILAEELQESIVLSDPDTVADYLRFHLGQEKVEVSVALLLNRQNQLIAVRELSRGTVAENTIYIREIVKLALDEYADSLIIAHNHPGGSPEPSQEDIMFTRRLAQAMSLVDVSLLDHFIVTAQTVRSFRQLGLMP</sequence>